<comment type="function">
    <text evidence="1">Required for organization of the cellular microtubule array and microtubule anchoring at the centrosome. Positively regulates the activity of the minus-end directed microtubule motor protein dynein. May enhance dynein-mediated microtubule sliding by targeting dynein to the microtubule plus end (By similarity).</text>
</comment>
<comment type="subcellular location">
    <subcellularLocation>
        <location evidence="1">Cytoplasm</location>
        <location evidence="1">Cytoskeleton</location>
    </subcellularLocation>
    <subcellularLocation>
        <location evidence="1">Cytoplasm</location>
        <location evidence="1">Cytoskeleton</location>
        <location evidence="1">Microtubule organizing center</location>
        <location evidence="1">Centrosome</location>
    </subcellularLocation>
    <subcellularLocation>
        <location evidence="1">Cytoplasm</location>
        <location evidence="1">Cytoskeleton</location>
        <location evidence="1">Spindle</location>
    </subcellularLocation>
    <text evidence="1">Localizes to the interphase centrosome and the mitotic spindle.</text>
</comment>
<comment type="PTM">
    <text evidence="1">Phosphorylated in mitosis.</text>
</comment>
<comment type="similarity">
    <text evidence="4">Belongs to the nudE family.</text>
</comment>
<organism>
    <name type="scientific">Danio rerio</name>
    <name type="common">Zebrafish</name>
    <name type="synonym">Brachydanio rerio</name>
    <dbReference type="NCBI Taxonomy" id="7955"/>
    <lineage>
        <taxon>Eukaryota</taxon>
        <taxon>Metazoa</taxon>
        <taxon>Chordata</taxon>
        <taxon>Craniata</taxon>
        <taxon>Vertebrata</taxon>
        <taxon>Euteleostomi</taxon>
        <taxon>Actinopterygii</taxon>
        <taxon>Neopterygii</taxon>
        <taxon>Teleostei</taxon>
        <taxon>Ostariophysi</taxon>
        <taxon>Cypriniformes</taxon>
        <taxon>Danionidae</taxon>
        <taxon>Danioninae</taxon>
        <taxon>Danio</taxon>
    </lineage>
</organism>
<feature type="chain" id="PRO_0000240217" description="Nuclear distribution protein nudE-like 1-A">
    <location>
        <begin position="1"/>
        <end position="344"/>
    </location>
</feature>
<feature type="region of interest" description="Disordered" evidence="3">
    <location>
        <begin position="181"/>
        <end position="209"/>
    </location>
</feature>
<feature type="region of interest" description="Disordered" evidence="3">
    <location>
        <begin position="322"/>
        <end position="344"/>
    </location>
</feature>
<feature type="coiled-coil region" evidence="2">
    <location>
        <begin position="26"/>
        <end position="187"/>
    </location>
</feature>
<feature type="compositionally biased region" description="Basic and acidic residues" evidence="3">
    <location>
        <begin position="181"/>
        <end position="190"/>
    </location>
</feature>
<keyword id="KW-0175">Coiled coil</keyword>
<keyword id="KW-0963">Cytoplasm</keyword>
<keyword id="KW-0206">Cytoskeleton</keyword>
<keyword id="KW-0493">Microtubule</keyword>
<keyword id="KW-0597">Phosphoprotein</keyword>
<keyword id="KW-1185">Reference proteome</keyword>
<keyword id="KW-0813">Transport</keyword>
<evidence type="ECO:0000250" key="1"/>
<evidence type="ECO:0000255" key="2"/>
<evidence type="ECO:0000256" key="3">
    <source>
        <dbReference type="SAM" id="MobiDB-lite"/>
    </source>
</evidence>
<evidence type="ECO:0000305" key="4"/>
<gene>
    <name type="primary">ndel1a</name>
</gene>
<reference key="1">
    <citation type="submission" date="2003-08" db="EMBL/GenBank/DDBJ databases">
        <authorList>
            <consortium name="NIH - Zebrafish Gene Collection (ZGC) project"/>
        </authorList>
    </citation>
    <scope>NUCLEOTIDE SEQUENCE [LARGE SCALE MRNA]</scope>
    <source>
        <strain>SJD</strain>
    </source>
</reference>
<sequence>MDADMIPKFTTKEEEIDFWKALSLKYKKSYKEAQEELLEFQEGSRELETELETQLGQAEHRIRDLQADNQRLQHELDSLKEKLEYQYAQSYKQISVLEDDLSQTRGIKEQLHKYVRELEQANDDLERAKRATITSLEDFEQRLNQAIERNAFLESELDEKESLLVSVQRLKDEARDLRQELAVRDTRSEVTRMSAPSSPTPDNDKTDSAVQASLSLPATPLSKNLDNAFTSQTVLANGSTNAALTPSARISALNIVGDLLRKVGALESKLAACRNFAKDQAARKNYVTNVNGNLINGDISNYSHSLHTSYFDKARTVNGLDPGDGTHITAPPRSNSPSGLVLSV</sequence>
<name>NDL1A_DANRE</name>
<proteinExistence type="evidence at transcript level"/>
<dbReference type="EMBL" id="BC055587">
    <property type="protein sequence ID" value="AAH55587.1"/>
    <property type="molecule type" value="mRNA"/>
</dbReference>
<dbReference type="RefSeq" id="NP_958501.1">
    <property type="nucleotide sequence ID" value="NM_201344.1"/>
</dbReference>
<dbReference type="SMR" id="Q7SXI6"/>
<dbReference type="FunCoup" id="Q7SXI6">
    <property type="interactions" value="1368"/>
</dbReference>
<dbReference type="STRING" id="7955.ENSDARP00000003032"/>
<dbReference type="PaxDb" id="7955-ENSDARP00000003032"/>
<dbReference type="GeneID" id="394244"/>
<dbReference type="KEGG" id="dre:394244"/>
<dbReference type="AGR" id="ZFIN:ZDB-GENE-040115-2"/>
<dbReference type="CTD" id="394244"/>
<dbReference type="ZFIN" id="ZDB-GENE-040115-2">
    <property type="gene designation" value="ndel1a"/>
</dbReference>
<dbReference type="eggNOG" id="KOG1853">
    <property type="taxonomic scope" value="Eukaryota"/>
</dbReference>
<dbReference type="InParanoid" id="Q7SXI6"/>
<dbReference type="OrthoDB" id="5877028at2759"/>
<dbReference type="PhylomeDB" id="Q7SXI6"/>
<dbReference type="PRO" id="PR:Q7SXI6"/>
<dbReference type="Proteomes" id="UP000000437">
    <property type="component" value="Chromosome 12"/>
</dbReference>
<dbReference type="GO" id="GO:0005813">
    <property type="term" value="C:centrosome"/>
    <property type="evidence" value="ECO:0000318"/>
    <property type="project" value="GO_Central"/>
</dbReference>
<dbReference type="GO" id="GO:0005737">
    <property type="term" value="C:cytoplasm"/>
    <property type="evidence" value="ECO:0007669"/>
    <property type="project" value="UniProtKB-KW"/>
</dbReference>
<dbReference type="GO" id="GO:0005871">
    <property type="term" value="C:kinesin complex"/>
    <property type="evidence" value="ECO:0000318"/>
    <property type="project" value="GO_Central"/>
</dbReference>
<dbReference type="GO" id="GO:0000776">
    <property type="term" value="C:kinetochore"/>
    <property type="evidence" value="ECO:0000318"/>
    <property type="project" value="GO_Central"/>
</dbReference>
<dbReference type="GO" id="GO:0005874">
    <property type="term" value="C:microtubule"/>
    <property type="evidence" value="ECO:0007669"/>
    <property type="project" value="UniProtKB-KW"/>
</dbReference>
<dbReference type="GO" id="GO:0005819">
    <property type="term" value="C:spindle"/>
    <property type="evidence" value="ECO:0007669"/>
    <property type="project" value="UniProtKB-SubCell"/>
</dbReference>
<dbReference type="GO" id="GO:0008017">
    <property type="term" value="F:microtubule binding"/>
    <property type="evidence" value="ECO:0000318"/>
    <property type="project" value="GO_Central"/>
</dbReference>
<dbReference type="GO" id="GO:0016477">
    <property type="term" value="P:cell migration"/>
    <property type="evidence" value="ECO:0000318"/>
    <property type="project" value="GO_Central"/>
</dbReference>
<dbReference type="GO" id="GO:0051642">
    <property type="term" value="P:centrosome localization"/>
    <property type="evidence" value="ECO:0000318"/>
    <property type="project" value="GO_Central"/>
</dbReference>
<dbReference type="GO" id="GO:0007059">
    <property type="term" value="P:chromosome segregation"/>
    <property type="evidence" value="ECO:0000318"/>
    <property type="project" value="GO_Central"/>
</dbReference>
<dbReference type="GO" id="GO:0051303">
    <property type="term" value="P:establishment of chromosome localization"/>
    <property type="evidence" value="ECO:0000318"/>
    <property type="project" value="GO_Central"/>
</dbReference>
<dbReference type="GO" id="GO:0000132">
    <property type="term" value="P:establishment of mitotic spindle orientation"/>
    <property type="evidence" value="ECO:0000318"/>
    <property type="project" value="GO_Central"/>
</dbReference>
<dbReference type="GO" id="GO:0007020">
    <property type="term" value="P:microtubule nucleation"/>
    <property type="evidence" value="ECO:0000318"/>
    <property type="project" value="GO_Central"/>
</dbReference>
<dbReference type="GO" id="GO:0007100">
    <property type="term" value="P:mitotic centrosome separation"/>
    <property type="evidence" value="ECO:0000318"/>
    <property type="project" value="GO_Central"/>
</dbReference>
<dbReference type="GO" id="GO:0010975">
    <property type="term" value="P:regulation of neuron projection development"/>
    <property type="evidence" value="ECO:0000318"/>
    <property type="project" value="GO_Central"/>
</dbReference>
<dbReference type="GO" id="GO:0047496">
    <property type="term" value="P:vesicle transport along microtubule"/>
    <property type="evidence" value="ECO:0000318"/>
    <property type="project" value="GO_Central"/>
</dbReference>
<dbReference type="Gene3D" id="6.10.250.1080">
    <property type="match status" value="1"/>
</dbReference>
<dbReference type="InterPro" id="IPR033494">
    <property type="entry name" value="NUDE"/>
</dbReference>
<dbReference type="InterPro" id="IPR006964">
    <property type="entry name" value="NUDE_dom"/>
</dbReference>
<dbReference type="PANTHER" id="PTHR10921">
    <property type="entry name" value="NUCLEAR DISTRIBUTION PROTEIN NUDE HOMOLOG 1"/>
    <property type="match status" value="1"/>
</dbReference>
<dbReference type="PANTHER" id="PTHR10921:SF0">
    <property type="entry name" value="NUCLEAR DISTRIBUTION PROTEIN NUDE-LIKE 1"/>
    <property type="match status" value="1"/>
</dbReference>
<dbReference type="Pfam" id="PF04880">
    <property type="entry name" value="NUDE_C"/>
    <property type="match status" value="1"/>
</dbReference>
<protein>
    <recommendedName>
        <fullName>Nuclear distribution protein nudE-like 1-A</fullName>
    </recommendedName>
</protein>
<accession>Q7SXI6</accession>